<accession>Q2G1C4</accession>
<dbReference type="EC" id="1.1.1.405" evidence="1 2"/>
<dbReference type="EMBL" id="CP000253">
    <property type="protein sequence ID" value="ABD29397.1"/>
    <property type="molecule type" value="Genomic_DNA"/>
</dbReference>
<dbReference type="RefSeq" id="WP_000610189.1">
    <property type="nucleotide sequence ID" value="NZ_LS483365.1"/>
</dbReference>
<dbReference type="RefSeq" id="YP_498816.1">
    <property type="nucleotide sequence ID" value="NC_007795.1"/>
</dbReference>
<dbReference type="SMR" id="Q2G1C4"/>
<dbReference type="STRING" id="93061.SAOUHSC_00221"/>
<dbReference type="PaxDb" id="1280-SAXN108_0231"/>
<dbReference type="GeneID" id="3920297"/>
<dbReference type="KEGG" id="sao:SAOUHSC_00221"/>
<dbReference type="PATRIC" id="fig|93061.5.peg.203"/>
<dbReference type="eggNOG" id="COG1063">
    <property type="taxonomic scope" value="Bacteria"/>
</dbReference>
<dbReference type="HOGENOM" id="CLU_823603_0_0_9"/>
<dbReference type="OrthoDB" id="1700359at2"/>
<dbReference type="SABIO-RK" id="Q2G1C4"/>
<dbReference type="UniPathway" id="UPA00790"/>
<dbReference type="PRO" id="PR:Q2G1C4"/>
<dbReference type="Proteomes" id="UP000008816">
    <property type="component" value="Chromosome"/>
</dbReference>
<dbReference type="GO" id="GO:0050256">
    <property type="term" value="F:ribitol-5-phosphate 2-dehydrogenase [(NAD(P)+] activity"/>
    <property type="evidence" value="ECO:0007669"/>
    <property type="project" value="UniProtKB-UniRule"/>
</dbReference>
<dbReference type="GO" id="GO:0008270">
    <property type="term" value="F:zinc ion binding"/>
    <property type="evidence" value="ECO:0007669"/>
    <property type="project" value="UniProtKB-UniRule"/>
</dbReference>
<dbReference type="GO" id="GO:0071555">
    <property type="term" value="P:cell wall organization"/>
    <property type="evidence" value="ECO:0007669"/>
    <property type="project" value="UniProtKB-KW"/>
</dbReference>
<dbReference type="GO" id="GO:1902012">
    <property type="term" value="P:poly(ribitol phosphate) teichoic acid biosynthetic process"/>
    <property type="evidence" value="ECO:0007669"/>
    <property type="project" value="UniProtKB-UniRule"/>
</dbReference>
<dbReference type="Gene3D" id="3.90.180.10">
    <property type="entry name" value="Medium-chain alcohol dehydrogenases, catalytic domain"/>
    <property type="match status" value="1"/>
</dbReference>
<dbReference type="Gene3D" id="3.40.50.720">
    <property type="entry name" value="NAD(P)-binding Rossmann-like Domain"/>
    <property type="match status" value="1"/>
</dbReference>
<dbReference type="HAMAP" id="MF_02069">
    <property type="entry name" value="TarJ"/>
    <property type="match status" value="1"/>
</dbReference>
<dbReference type="InterPro" id="IPR013149">
    <property type="entry name" value="ADH-like_C"/>
</dbReference>
<dbReference type="InterPro" id="IPR013154">
    <property type="entry name" value="ADH-like_N"/>
</dbReference>
<dbReference type="InterPro" id="IPR011032">
    <property type="entry name" value="GroES-like_sf"/>
</dbReference>
<dbReference type="InterPro" id="IPR036291">
    <property type="entry name" value="NAD(P)-bd_dom_sf"/>
</dbReference>
<dbReference type="InterPro" id="IPR034710">
    <property type="entry name" value="TarJ"/>
</dbReference>
<dbReference type="PANTHER" id="PTHR43350:SF19">
    <property type="entry name" value="D-GULOSIDE 3-DEHYDROGENASE"/>
    <property type="match status" value="1"/>
</dbReference>
<dbReference type="PANTHER" id="PTHR43350">
    <property type="entry name" value="NAD-DEPENDENT ALCOHOL DEHYDROGENASE"/>
    <property type="match status" value="1"/>
</dbReference>
<dbReference type="Pfam" id="PF08240">
    <property type="entry name" value="ADH_N"/>
    <property type="match status" value="1"/>
</dbReference>
<dbReference type="Pfam" id="PF00107">
    <property type="entry name" value="ADH_zinc_N"/>
    <property type="match status" value="1"/>
</dbReference>
<dbReference type="SUPFAM" id="SSF50129">
    <property type="entry name" value="GroES-like"/>
    <property type="match status" value="1"/>
</dbReference>
<dbReference type="SUPFAM" id="SSF51735">
    <property type="entry name" value="NAD(P)-binding Rossmann-fold domains"/>
    <property type="match status" value="1"/>
</dbReference>
<reference key="1">
    <citation type="book" date="2006" name="Gram positive pathogens, 2nd edition">
        <title>The Staphylococcus aureus NCTC 8325 genome.</title>
        <editorList>
            <person name="Fischetti V."/>
            <person name="Novick R."/>
            <person name="Ferretti J."/>
            <person name="Portnoy D."/>
            <person name="Rood J."/>
        </editorList>
        <authorList>
            <person name="Gillaspy A.F."/>
            <person name="Worrell V."/>
            <person name="Orvis J."/>
            <person name="Roe B.A."/>
            <person name="Dyer D.W."/>
            <person name="Iandolo J.J."/>
        </authorList>
    </citation>
    <scope>NUCLEOTIDE SEQUENCE [LARGE SCALE GENOMIC DNA]</scope>
    <source>
        <strain>NCTC 8325 / PS 47</strain>
    </source>
</reference>
<reference key="2">
    <citation type="journal article" date="2008" name="J. Bacteriol.">
        <title>Duplication of teichoic acid biosynthetic genes in Staphylococcus aureus leads to functionally redundant poly(ribitol phosphate) polymerases.</title>
        <authorList>
            <person name="Pereira M.P."/>
            <person name="D'Elia M.A."/>
            <person name="Troczynska J."/>
            <person name="Brown E.D."/>
        </authorList>
    </citation>
    <scope>FUNCTION</scope>
    <scope>CATALYTIC ACTIVITY</scope>
    <scope>BIOPHYSICOCHEMICAL PROPERTIES</scope>
    <scope>PATHWAY</scope>
    <scope>SUBUNIT</scope>
    <source>
        <strain>RN4220</strain>
    </source>
</reference>
<keyword id="KW-0961">Cell wall biogenesis/degradation</keyword>
<keyword id="KW-0479">Metal-binding</keyword>
<keyword id="KW-0521">NADP</keyword>
<keyword id="KW-0560">Oxidoreductase</keyword>
<keyword id="KW-1185">Reference proteome</keyword>
<keyword id="KW-0777">Teichoic acid biosynthesis</keyword>
<keyword id="KW-0862">Zinc</keyword>
<proteinExistence type="evidence at protein level"/>
<name>TARJ2_STAA8</name>
<evidence type="ECO:0000255" key="1">
    <source>
        <dbReference type="HAMAP-Rule" id="MF_02069"/>
    </source>
</evidence>
<evidence type="ECO:0000269" key="2">
    <source>
    </source>
</evidence>
<evidence type="ECO:0000303" key="3">
    <source>
    </source>
</evidence>
<evidence type="ECO:0000305" key="4"/>
<evidence type="ECO:0000312" key="5">
    <source>
        <dbReference type="EMBL" id="ABD29397.1"/>
    </source>
</evidence>
<comment type="function">
    <text evidence="1 2">Catalyzes the NADPH dependent reduction of D-ribulose 5-phosphate to D-ribitol 5-phosphate.</text>
</comment>
<comment type="catalytic activity">
    <reaction evidence="1 2">
        <text>D-ribitol 5-phosphate + NADP(+) = D-ribulose 5-phosphate + NADPH + H(+)</text>
        <dbReference type="Rhea" id="RHEA:19921"/>
        <dbReference type="ChEBI" id="CHEBI:15378"/>
        <dbReference type="ChEBI" id="CHEBI:57695"/>
        <dbReference type="ChEBI" id="CHEBI:57783"/>
        <dbReference type="ChEBI" id="CHEBI:58121"/>
        <dbReference type="ChEBI" id="CHEBI:58349"/>
        <dbReference type="EC" id="1.1.1.405"/>
    </reaction>
</comment>
<comment type="cofactor">
    <cofactor evidence="1">
        <name>Zn(2+)</name>
        <dbReference type="ChEBI" id="CHEBI:29105"/>
    </cofactor>
</comment>
<comment type="biophysicochemical properties">
    <kinetics>
        <KM evidence="2">6.21 uM for NADPH</KM>
        <KM evidence="2">11 uM for ribulose 5-phosphate</KM>
    </kinetics>
</comment>
<comment type="pathway">
    <text evidence="1 2">Cell wall biogenesis; poly(ribitol phosphate) teichoic acid biosynthesis.</text>
</comment>
<comment type="subunit">
    <text evidence="2">Heterodimer together with TarI.</text>
</comment>
<comment type="similarity">
    <text evidence="1">Belongs to the zinc-containing alcohol dehydrogenase family.</text>
</comment>
<sequence>MINQVYQLVAPRQFDVTYNNVDIYGNHVIVRPLYLSICAADQRYYTGRRDENVLRKKLPMSLVHEAVGEVVFDSKGVFEKGTKVVMVPNTPTEQHHIIAENYLASSYFRSSGYDGFMQDYVVMAHDRIVPLPNDIDLSTISYTELVSVSYHAIQRFERKSIPLKTSFGIWGDGNLGYITAILLRKLYPEAKTYVFGKTDYKLSHFSFVDDIFTVNQIPDDLKIDHAFECVGGKGSQVALQQIVEHISPEGSIALLGVSELPVEVNTRLVLEKGLTLIGSSRSGSKDFEQVVDLYRKYPDIVEKLALLKGHEINVCTMQDIVQAFEMDLSTSWGKTVLKWTI</sequence>
<feature type="chain" id="PRO_0000437488" description="Ribulose-5-phosphate reductase 2">
    <location>
        <begin position="1"/>
        <end position="341"/>
    </location>
</feature>
<feature type="binding site" evidence="1">
    <location>
        <position position="38"/>
    </location>
    <ligand>
        <name>Zn(2+)</name>
        <dbReference type="ChEBI" id="CHEBI:29105"/>
        <note>catalytic</note>
    </ligand>
</feature>
<feature type="binding site" evidence="1">
    <location>
        <position position="64"/>
    </location>
    <ligand>
        <name>Zn(2+)</name>
        <dbReference type="ChEBI" id="CHEBI:29105"/>
        <note>catalytic</note>
    </ligand>
</feature>
<feature type="binding site" evidence="1">
    <location>
        <position position="65"/>
    </location>
    <ligand>
        <name>Zn(2+)</name>
        <dbReference type="ChEBI" id="CHEBI:29105"/>
        <note>catalytic</note>
    </ligand>
</feature>
<feature type="binding site" evidence="1">
    <location>
        <position position="144"/>
    </location>
    <ligand>
        <name>Zn(2+)</name>
        <dbReference type="ChEBI" id="CHEBI:29105"/>
        <note>catalytic</note>
    </ligand>
</feature>
<organism>
    <name type="scientific">Staphylococcus aureus (strain NCTC 8325 / PS 47)</name>
    <dbReference type="NCBI Taxonomy" id="93061"/>
    <lineage>
        <taxon>Bacteria</taxon>
        <taxon>Bacillati</taxon>
        <taxon>Bacillota</taxon>
        <taxon>Bacilli</taxon>
        <taxon>Bacillales</taxon>
        <taxon>Staphylococcaceae</taxon>
        <taxon>Staphylococcus</taxon>
    </lineage>
</organism>
<gene>
    <name evidence="3" type="primary">tarJ'</name>
    <name evidence="5" type="ordered locus">SAOUHSC_00221</name>
</gene>
<protein>
    <recommendedName>
        <fullName evidence="1 4">Ribulose-5-phosphate reductase 2</fullName>
        <shortName evidence="1 4">Ribulose-5-P reductase 2</shortName>
        <ecNumber evidence="1 2">1.1.1.405</ecNumber>
    </recommendedName>
    <alternativeName>
        <fullName evidence="1 4">Ribitol-5-phosphate dehydrogenase 2</fullName>
    </alternativeName>
</protein>